<feature type="chain" id="PRO_0000282228" description="UPF0060 membrane protein IL2332">
    <location>
        <begin position="1"/>
        <end position="112"/>
    </location>
</feature>
<feature type="transmembrane region" description="Helical" evidence="1">
    <location>
        <begin position="10"/>
        <end position="30"/>
    </location>
</feature>
<feature type="transmembrane region" description="Helical" evidence="1">
    <location>
        <begin position="36"/>
        <end position="56"/>
    </location>
</feature>
<feature type="transmembrane region" description="Helical" evidence="1">
    <location>
        <begin position="64"/>
        <end position="84"/>
    </location>
</feature>
<feature type="transmembrane region" description="Helical" evidence="1">
    <location>
        <begin position="90"/>
        <end position="110"/>
    </location>
</feature>
<accession>Q5QVY3</accession>
<gene>
    <name type="ordered locus">IL2332</name>
</gene>
<organism>
    <name type="scientific">Idiomarina loihiensis (strain ATCC BAA-735 / DSM 15497 / L2-TR)</name>
    <dbReference type="NCBI Taxonomy" id="283942"/>
    <lineage>
        <taxon>Bacteria</taxon>
        <taxon>Pseudomonadati</taxon>
        <taxon>Pseudomonadota</taxon>
        <taxon>Gammaproteobacteria</taxon>
        <taxon>Alteromonadales</taxon>
        <taxon>Idiomarinaceae</taxon>
        <taxon>Idiomarina</taxon>
    </lineage>
</organism>
<evidence type="ECO:0000255" key="1">
    <source>
        <dbReference type="HAMAP-Rule" id="MF_00010"/>
    </source>
</evidence>
<keyword id="KW-0997">Cell inner membrane</keyword>
<keyword id="KW-1003">Cell membrane</keyword>
<keyword id="KW-0472">Membrane</keyword>
<keyword id="KW-1185">Reference proteome</keyword>
<keyword id="KW-0812">Transmembrane</keyword>
<keyword id="KW-1133">Transmembrane helix</keyword>
<sequence>MSVLLIAKTLGLFFITAIAEIIGCYLPYLWLKKDGSAWLLIPAAISLAVFAWLLTLHPAESGRVYAAYGGVYVVTALLWLKAVEGASLSTYDAVGAAFTLTGMAIIAVGWNH</sequence>
<reference key="1">
    <citation type="journal article" date="2004" name="Proc. Natl. Acad. Sci. U.S.A.">
        <title>Genome sequence of the deep-sea gamma-proteobacterium Idiomarina loihiensis reveals amino acid fermentation as a source of carbon and energy.</title>
        <authorList>
            <person name="Hou S."/>
            <person name="Saw J.H."/>
            <person name="Lee K.S."/>
            <person name="Freitas T.A."/>
            <person name="Belisle C."/>
            <person name="Kawarabayasi Y."/>
            <person name="Donachie S.P."/>
            <person name="Pikina A."/>
            <person name="Galperin M.Y."/>
            <person name="Koonin E.V."/>
            <person name="Makarova K.S."/>
            <person name="Omelchenko M.V."/>
            <person name="Sorokin A."/>
            <person name="Wolf Y.I."/>
            <person name="Li Q.X."/>
            <person name="Keum Y.S."/>
            <person name="Campbell S."/>
            <person name="Denery J."/>
            <person name="Aizawa S."/>
            <person name="Shibata S."/>
            <person name="Malahoff A."/>
            <person name="Alam M."/>
        </authorList>
    </citation>
    <scope>NUCLEOTIDE SEQUENCE [LARGE SCALE GENOMIC DNA]</scope>
    <source>
        <strain>ATCC BAA-735 / DSM 15497 / L2-TR</strain>
    </source>
</reference>
<comment type="subcellular location">
    <subcellularLocation>
        <location evidence="1">Cell inner membrane</location>
        <topology evidence="1">Multi-pass membrane protein</topology>
    </subcellularLocation>
</comment>
<comment type="similarity">
    <text evidence="1">Belongs to the UPF0060 family.</text>
</comment>
<name>Y2332_IDILO</name>
<dbReference type="EMBL" id="AE017340">
    <property type="protein sequence ID" value="AAV83164.1"/>
    <property type="molecule type" value="Genomic_DNA"/>
</dbReference>
<dbReference type="RefSeq" id="WP_011235558.1">
    <property type="nucleotide sequence ID" value="NC_006512.1"/>
</dbReference>
<dbReference type="SMR" id="Q5QVY3"/>
<dbReference type="STRING" id="283942.IL2332"/>
<dbReference type="GeneID" id="41337528"/>
<dbReference type="KEGG" id="ilo:IL2332"/>
<dbReference type="eggNOG" id="COG1742">
    <property type="taxonomic scope" value="Bacteria"/>
</dbReference>
<dbReference type="HOGENOM" id="CLU_117653_2_0_6"/>
<dbReference type="OrthoDB" id="123240at2"/>
<dbReference type="Proteomes" id="UP000001171">
    <property type="component" value="Chromosome"/>
</dbReference>
<dbReference type="GO" id="GO:0005886">
    <property type="term" value="C:plasma membrane"/>
    <property type="evidence" value="ECO:0007669"/>
    <property type="project" value="UniProtKB-SubCell"/>
</dbReference>
<dbReference type="HAMAP" id="MF_00010">
    <property type="entry name" value="UPF0060"/>
    <property type="match status" value="1"/>
</dbReference>
<dbReference type="InterPro" id="IPR003844">
    <property type="entry name" value="UPF0060"/>
</dbReference>
<dbReference type="NCBIfam" id="NF002586">
    <property type="entry name" value="PRK02237.1"/>
    <property type="match status" value="1"/>
</dbReference>
<dbReference type="PANTHER" id="PTHR36116">
    <property type="entry name" value="UPF0060 MEMBRANE PROTEIN YNFA"/>
    <property type="match status" value="1"/>
</dbReference>
<dbReference type="PANTHER" id="PTHR36116:SF1">
    <property type="entry name" value="UPF0060 MEMBRANE PROTEIN YNFA"/>
    <property type="match status" value="1"/>
</dbReference>
<dbReference type="Pfam" id="PF02694">
    <property type="entry name" value="UPF0060"/>
    <property type="match status" value="1"/>
</dbReference>
<proteinExistence type="inferred from homology"/>
<protein>
    <recommendedName>
        <fullName evidence="1">UPF0060 membrane protein IL2332</fullName>
    </recommendedName>
</protein>